<proteinExistence type="evidence at protein level"/>
<dbReference type="EMBL" id="L31881">
    <property type="protein sequence ID" value="AAA53422.1"/>
    <property type="molecule type" value="mRNA"/>
</dbReference>
<dbReference type="EMBL" id="U18759">
    <property type="protein sequence ID" value="AAB52369.1"/>
    <property type="molecule type" value="mRNA"/>
</dbReference>
<dbReference type="EMBL" id="U18761">
    <property type="protein sequence ID" value="AAB52371.1"/>
    <property type="molecule type" value="mRNA"/>
</dbReference>
<dbReference type="EMBL" id="AK297261">
    <property type="protein sequence ID" value="BAG59737.1"/>
    <property type="molecule type" value="mRNA"/>
</dbReference>
<dbReference type="EMBL" id="BT019732">
    <property type="protein sequence ID" value="AAV38537.1"/>
    <property type="molecule type" value="mRNA"/>
</dbReference>
<dbReference type="EMBL" id="AC004660">
    <property type="protein sequence ID" value="AAC15752.1"/>
    <property type="molecule type" value="Genomic_DNA"/>
</dbReference>
<dbReference type="EMBL" id="AC007787">
    <property type="protein sequence ID" value="AAD38240.1"/>
    <property type="molecule type" value="Genomic_DNA"/>
</dbReference>
<dbReference type="EMBL" id="AC007787">
    <property type="protein sequence ID" value="AAD38241.1"/>
    <property type="molecule type" value="Genomic_DNA"/>
</dbReference>
<dbReference type="EMBL" id="CH471106">
    <property type="protein sequence ID" value="EAW84340.1"/>
    <property type="molecule type" value="Genomic_DNA"/>
</dbReference>
<dbReference type="EMBL" id="BC117113">
    <property type="protein sequence ID" value="AAI17114.1"/>
    <property type="molecule type" value="mRNA"/>
</dbReference>
<dbReference type="EMBL" id="BC117115">
    <property type="protein sequence ID" value="AAI17116.1"/>
    <property type="molecule type" value="mRNA"/>
</dbReference>
<dbReference type="EMBL" id="U07811">
    <property type="protein sequence ID" value="AAA93126.1"/>
    <property type="molecule type" value="mRNA"/>
</dbReference>
<dbReference type="CCDS" id="CCDS45996.1">
    <molecule id="Q14938-3"/>
</dbReference>
<dbReference type="CCDS" id="CCDS59359.1">
    <molecule id="Q14938-6"/>
</dbReference>
<dbReference type="CCDS" id="CCDS92530.1">
    <molecule id="Q14938-1"/>
</dbReference>
<dbReference type="CCDS" id="CCDS92531.1">
    <molecule id="Q14938-4"/>
</dbReference>
<dbReference type="CCDS" id="CCDS92533.1">
    <molecule id="Q14938-5"/>
</dbReference>
<dbReference type="PIR" id="S50112">
    <property type="entry name" value="S50112"/>
</dbReference>
<dbReference type="RefSeq" id="NP_001257973.1">
    <molecule id="Q14938-6"/>
    <property type="nucleotide sequence ID" value="NM_001271044.3"/>
</dbReference>
<dbReference type="RefSeq" id="NP_001352831.1">
    <molecule id="Q14938-1"/>
    <property type="nucleotide sequence ID" value="NM_001365902.3"/>
</dbReference>
<dbReference type="RefSeq" id="NP_001352914.1">
    <molecule id="Q14938-5"/>
    <property type="nucleotide sequence ID" value="NM_001365985.2"/>
</dbReference>
<dbReference type="RefSeq" id="NP_001365333.1">
    <molecule id="Q14938-4"/>
    <property type="nucleotide sequence ID" value="NM_001378404.1"/>
</dbReference>
<dbReference type="RefSeq" id="NP_002492.2">
    <molecule id="Q14938-3"/>
    <property type="nucleotide sequence ID" value="NM_002501.4"/>
</dbReference>
<dbReference type="RefSeq" id="XP_005259975.1">
    <property type="nucleotide sequence ID" value="XM_005259918.4"/>
</dbReference>
<dbReference type="PDB" id="7QQD">
    <property type="method" value="X-ray"/>
    <property type="resolution" value="2.70 A"/>
    <property type="chains" value="A/B=14-176"/>
</dbReference>
<dbReference type="PDB" id="7QQE">
    <property type="method" value="X-ray"/>
    <property type="resolution" value="3.50 A"/>
    <property type="chains" value="A=14-176"/>
</dbReference>
<dbReference type="PDBsum" id="7QQD"/>
<dbReference type="PDBsum" id="7QQE"/>
<dbReference type="SMR" id="Q14938"/>
<dbReference type="BioGRID" id="110856">
    <property type="interactions" value="200"/>
</dbReference>
<dbReference type="FunCoup" id="Q14938">
    <property type="interactions" value="1271"/>
</dbReference>
<dbReference type="IntAct" id="Q14938">
    <property type="interactions" value="174"/>
</dbReference>
<dbReference type="MINT" id="Q14938"/>
<dbReference type="STRING" id="9606.ENSP00000380781"/>
<dbReference type="GlyCosmos" id="Q14938">
    <property type="glycosylation" value="1 site, 1 glycan"/>
</dbReference>
<dbReference type="GlyGen" id="Q14938">
    <property type="glycosylation" value="2 sites, 1 O-linked glycan (2 sites)"/>
</dbReference>
<dbReference type="iPTMnet" id="Q14938"/>
<dbReference type="PhosphoSitePlus" id="Q14938"/>
<dbReference type="SwissPalm" id="Q14938"/>
<dbReference type="BioMuta" id="NFIX"/>
<dbReference type="DMDM" id="14195678"/>
<dbReference type="jPOST" id="Q14938"/>
<dbReference type="MassIVE" id="Q14938"/>
<dbReference type="PaxDb" id="9606-ENSP00000380781"/>
<dbReference type="PeptideAtlas" id="Q14938"/>
<dbReference type="ProteomicsDB" id="60247">
    <molecule id="Q14938-1"/>
</dbReference>
<dbReference type="ProteomicsDB" id="60248">
    <molecule id="Q14938-2"/>
</dbReference>
<dbReference type="ProteomicsDB" id="60249">
    <molecule id="Q14938-3"/>
</dbReference>
<dbReference type="ProteomicsDB" id="60250">
    <molecule id="Q14938-4"/>
</dbReference>
<dbReference type="ProteomicsDB" id="60251">
    <molecule id="Q14938-5"/>
</dbReference>
<dbReference type="Pumba" id="Q14938"/>
<dbReference type="Antibodypedia" id="7151">
    <property type="antibodies" value="135 antibodies from 27 providers"/>
</dbReference>
<dbReference type="DNASU" id="4784"/>
<dbReference type="Ensembl" id="ENST00000397661.6">
    <molecule id="Q14938-3"/>
    <property type="protein sequence ID" value="ENSP00000380781.2"/>
    <property type="gene ID" value="ENSG00000008441.19"/>
</dbReference>
<dbReference type="Ensembl" id="ENST00000585575.5">
    <molecule id="Q14938-4"/>
    <property type="protein sequence ID" value="ENSP00000468794.1"/>
    <property type="gene ID" value="ENSG00000008441.19"/>
</dbReference>
<dbReference type="Ensembl" id="ENST00000587260.1">
    <molecule id="Q14938-5"/>
    <property type="protein sequence ID" value="ENSP00000467785.1"/>
    <property type="gene ID" value="ENSG00000008441.19"/>
</dbReference>
<dbReference type="Ensembl" id="ENST00000587760.5">
    <molecule id="Q14938-6"/>
    <property type="protein sequence ID" value="ENSP00000466389.1"/>
    <property type="gene ID" value="ENSG00000008441.19"/>
</dbReference>
<dbReference type="Ensembl" id="ENST00000592199.6">
    <molecule id="Q14938-1"/>
    <property type="protein sequence ID" value="ENSP00000467512.1"/>
    <property type="gene ID" value="ENSG00000008441.19"/>
</dbReference>
<dbReference type="GeneID" id="4784"/>
<dbReference type="KEGG" id="hsa:4784"/>
<dbReference type="MANE-Select" id="ENST00000592199.6">
    <property type="protein sequence ID" value="ENSP00000467512.1"/>
    <property type="RefSeq nucleotide sequence ID" value="NM_001365902.3"/>
    <property type="RefSeq protein sequence ID" value="NP_001352831.1"/>
</dbReference>
<dbReference type="UCSC" id="uc002mwd.4">
    <molecule id="Q14938-1"/>
    <property type="organism name" value="human"/>
</dbReference>
<dbReference type="AGR" id="HGNC:7788"/>
<dbReference type="CTD" id="4784"/>
<dbReference type="DisGeNET" id="4784"/>
<dbReference type="GeneCards" id="NFIX"/>
<dbReference type="GeneReviews" id="NFIX"/>
<dbReference type="HGNC" id="HGNC:7788">
    <property type="gene designation" value="NFIX"/>
</dbReference>
<dbReference type="HPA" id="ENSG00000008441">
    <property type="expression patterns" value="Tissue enhanced (skeletal)"/>
</dbReference>
<dbReference type="MalaCards" id="NFIX"/>
<dbReference type="MIM" id="164005">
    <property type="type" value="gene"/>
</dbReference>
<dbReference type="MIM" id="602535">
    <property type="type" value="phenotype"/>
</dbReference>
<dbReference type="MIM" id="614753">
    <property type="type" value="phenotype"/>
</dbReference>
<dbReference type="neXtProt" id="NX_Q14938"/>
<dbReference type="OpenTargets" id="ENSG00000008441"/>
<dbReference type="Orphanet" id="447980">
    <property type="disease" value="19p13.3 microduplication syndrome"/>
</dbReference>
<dbReference type="Orphanet" id="420179">
    <property type="disease" value="Malan overgrowth syndrome"/>
</dbReference>
<dbReference type="Orphanet" id="561">
    <property type="disease" value="Marshall-Smith syndrome"/>
</dbReference>
<dbReference type="PharmGKB" id="PA31594"/>
<dbReference type="VEuPathDB" id="HostDB:ENSG00000008441"/>
<dbReference type="eggNOG" id="KOG3663">
    <property type="taxonomic scope" value="Eukaryota"/>
</dbReference>
<dbReference type="GeneTree" id="ENSGT00950000182916"/>
<dbReference type="InParanoid" id="Q14938"/>
<dbReference type="OMA" id="CAHAAYE"/>
<dbReference type="OrthoDB" id="10055441at2759"/>
<dbReference type="PAN-GO" id="Q14938">
    <property type="GO annotations" value="4 GO annotations based on evolutionary models"/>
</dbReference>
<dbReference type="PhylomeDB" id="Q14938"/>
<dbReference type="TreeFam" id="TF313889"/>
<dbReference type="PathwayCommons" id="Q14938"/>
<dbReference type="Reactome" id="R-HSA-73980">
    <property type="pathway name" value="RNA Polymerase III Transcription Termination"/>
</dbReference>
<dbReference type="Reactome" id="R-HSA-749476">
    <property type="pathway name" value="RNA Polymerase III Abortive And Retractive Initiation"/>
</dbReference>
<dbReference type="SignaLink" id="Q14938"/>
<dbReference type="SIGNOR" id="Q14938"/>
<dbReference type="BioGRID-ORCS" id="4784">
    <property type="hits" value="19 hits in 1180 CRISPR screens"/>
</dbReference>
<dbReference type="ChiTaRS" id="NFIX">
    <property type="organism name" value="human"/>
</dbReference>
<dbReference type="GeneWiki" id="NFIX"/>
<dbReference type="GenomeRNAi" id="4784"/>
<dbReference type="Pharos" id="Q14938">
    <property type="development level" value="Tbio"/>
</dbReference>
<dbReference type="PRO" id="PR:Q14938"/>
<dbReference type="Proteomes" id="UP000005640">
    <property type="component" value="Chromosome 19"/>
</dbReference>
<dbReference type="RNAct" id="Q14938">
    <property type="molecule type" value="protein"/>
</dbReference>
<dbReference type="Bgee" id="ENSG00000008441">
    <property type="expression patterns" value="Expressed in cortical plate and 187 other cell types or tissues"/>
</dbReference>
<dbReference type="ExpressionAtlas" id="Q14938">
    <property type="expression patterns" value="baseline and differential"/>
</dbReference>
<dbReference type="GO" id="GO:0000785">
    <property type="term" value="C:chromatin"/>
    <property type="evidence" value="ECO:0000247"/>
    <property type="project" value="NTNU_SB"/>
</dbReference>
<dbReference type="GO" id="GO:0005634">
    <property type="term" value="C:nucleus"/>
    <property type="evidence" value="ECO:0000318"/>
    <property type="project" value="GO_Central"/>
</dbReference>
<dbReference type="GO" id="GO:0003700">
    <property type="term" value="F:DNA-binding transcription factor activity"/>
    <property type="evidence" value="ECO:0000304"/>
    <property type="project" value="ProtInc"/>
</dbReference>
<dbReference type="GO" id="GO:0000981">
    <property type="term" value="F:DNA-binding transcription factor activity, RNA polymerase II-specific"/>
    <property type="evidence" value="ECO:0000247"/>
    <property type="project" value="NTNU_SB"/>
</dbReference>
<dbReference type="GO" id="GO:0000978">
    <property type="term" value="F:RNA polymerase II cis-regulatory region sequence-specific DNA binding"/>
    <property type="evidence" value="ECO:0000318"/>
    <property type="project" value="GO_Central"/>
</dbReference>
<dbReference type="GO" id="GO:1990837">
    <property type="term" value="F:sequence-specific double-stranded DNA binding"/>
    <property type="evidence" value="ECO:0000314"/>
    <property type="project" value="ARUK-UCL"/>
</dbReference>
<dbReference type="GO" id="GO:0006260">
    <property type="term" value="P:DNA replication"/>
    <property type="evidence" value="ECO:0007669"/>
    <property type="project" value="UniProtKB-KW"/>
</dbReference>
<dbReference type="GO" id="GO:0000122">
    <property type="term" value="P:negative regulation of transcription by RNA polymerase II"/>
    <property type="evidence" value="ECO:0000314"/>
    <property type="project" value="UniProtKB"/>
</dbReference>
<dbReference type="GO" id="GO:0045944">
    <property type="term" value="P:positive regulation of transcription by RNA polymerase II"/>
    <property type="evidence" value="ECO:0000314"/>
    <property type="project" value="UniProtKB"/>
</dbReference>
<dbReference type="GO" id="GO:0006357">
    <property type="term" value="P:regulation of transcription by RNA polymerase II"/>
    <property type="evidence" value="ECO:0000318"/>
    <property type="project" value="GO_Central"/>
</dbReference>
<dbReference type="GO" id="GO:0006366">
    <property type="term" value="P:transcription by RNA polymerase II"/>
    <property type="evidence" value="ECO:0000304"/>
    <property type="project" value="ProtInc"/>
</dbReference>
<dbReference type="InterPro" id="IPR000647">
    <property type="entry name" value="CTF/NFI"/>
</dbReference>
<dbReference type="InterPro" id="IPR020604">
    <property type="entry name" value="CTF/NFI_DNA-bd-dom"/>
</dbReference>
<dbReference type="InterPro" id="IPR019739">
    <property type="entry name" value="CTF/NFI_DNA-bd_CS"/>
</dbReference>
<dbReference type="InterPro" id="IPR019548">
    <property type="entry name" value="CTF/NFI_DNA-bd_N"/>
</dbReference>
<dbReference type="InterPro" id="IPR003619">
    <property type="entry name" value="MAD_homology1_Dwarfin-type"/>
</dbReference>
<dbReference type="PANTHER" id="PTHR11492:SF3">
    <property type="entry name" value="NUCLEAR FACTOR 1 X-TYPE"/>
    <property type="match status" value="1"/>
</dbReference>
<dbReference type="PANTHER" id="PTHR11492">
    <property type="entry name" value="NUCLEAR FACTOR I"/>
    <property type="match status" value="1"/>
</dbReference>
<dbReference type="Pfam" id="PF00859">
    <property type="entry name" value="CTF_NFI"/>
    <property type="match status" value="1"/>
</dbReference>
<dbReference type="Pfam" id="PF03165">
    <property type="entry name" value="MH1"/>
    <property type="match status" value="1"/>
</dbReference>
<dbReference type="Pfam" id="PF10524">
    <property type="entry name" value="NfI_DNAbd_pre-N"/>
    <property type="match status" value="1"/>
</dbReference>
<dbReference type="SMART" id="SM00523">
    <property type="entry name" value="DWA"/>
    <property type="match status" value="1"/>
</dbReference>
<dbReference type="PROSITE" id="PS00349">
    <property type="entry name" value="CTF_NFI_1"/>
    <property type="match status" value="1"/>
</dbReference>
<dbReference type="PROSITE" id="PS51080">
    <property type="entry name" value="CTF_NFI_2"/>
    <property type="match status" value="1"/>
</dbReference>
<reference key="1">
    <citation type="journal article" date="1994" name="Nucleic Acids Res.">
        <title>Cloning and functional analysis of spliced isoforms of human nuclear factor I-X: interference with transcriptional activation by NFI/CTF in a cell-type specific manner.</title>
        <authorList>
            <person name="Apt D."/>
            <person name="Liu Y."/>
            <person name="Bernard H.U."/>
        </authorList>
    </citation>
    <scope>NUCLEOTIDE SEQUENCE [MRNA] (ISOFORMS 1 AND 2)</scope>
    <source>
        <tissue>Foreskin</tissue>
    </source>
</reference>
<reference key="2">
    <citation type="journal article" date="1996" name="J. Neurovirol.">
        <title>Expression of multiple classes of the nuclear factor-1 family in the developing human brain: differential expression of two classes of NF-1 genes.</title>
        <authorList>
            <person name="Sumner C."/>
            <person name="Shinohara T."/>
            <person name="Durham L."/>
            <person name="Traub R."/>
            <person name="Major E.O."/>
            <person name="Amemiya K."/>
        </authorList>
    </citation>
    <scope>NUCLEOTIDE SEQUENCE [MRNA] (ISOFORMS 4 AND 5)</scope>
    <source>
        <tissue>Brain</tissue>
    </source>
</reference>
<reference key="3">
    <citation type="journal article" date="2004" name="Nat. Genet.">
        <title>Complete sequencing and characterization of 21,243 full-length human cDNAs.</title>
        <authorList>
            <person name="Ota T."/>
            <person name="Suzuki Y."/>
            <person name="Nishikawa T."/>
            <person name="Otsuki T."/>
            <person name="Sugiyama T."/>
            <person name="Irie R."/>
            <person name="Wakamatsu A."/>
            <person name="Hayashi K."/>
            <person name="Sato H."/>
            <person name="Nagai K."/>
            <person name="Kimura K."/>
            <person name="Makita H."/>
            <person name="Sekine M."/>
            <person name="Obayashi M."/>
            <person name="Nishi T."/>
            <person name="Shibahara T."/>
            <person name="Tanaka T."/>
            <person name="Ishii S."/>
            <person name="Yamamoto J."/>
            <person name="Saito K."/>
            <person name="Kawai Y."/>
            <person name="Isono Y."/>
            <person name="Nakamura Y."/>
            <person name="Nagahari K."/>
            <person name="Murakami K."/>
            <person name="Yasuda T."/>
            <person name="Iwayanagi T."/>
            <person name="Wagatsuma M."/>
            <person name="Shiratori A."/>
            <person name="Sudo H."/>
            <person name="Hosoiri T."/>
            <person name="Kaku Y."/>
            <person name="Kodaira H."/>
            <person name="Kondo H."/>
            <person name="Sugawara M."/>
            <person name="Takahashi M."/>
            <person name="Kanda K."/>
            <person name="Yokoi T."/>
            <person name="Furuya T."/>
            <person name="Kikkawa E."/>
            <person name="Omura Y."/>
            <person name="Abe K."/>
            <person name="Kamihara K."/>
            <person name="Katsuta N."/>
            <person name="Sato K."/>
            <person name="Tanikawa M."/>
            <person name="Yamazaki M."/>
            <person name="Ninomiya K."/>
            <person name="Ishibashi T."/>
            <person name="Yamashita H."/>
            <person name="Murakawa K."/>
            <person name="Fujimori K."/>
            <person name="Tanai H."/>
            <person name="Kimata M."/>
            <person name="Watanabe M."/>
            <person name="Hiraoka S."/>
            <person name="Chiba Y."/>
            <person name="Ishida S."/>
            <person name="Ono Y."/>
            <person name="Takiguchi S."/>
            <person name="Watanabe S."/>
            <person name="Yosida M."/>
            <person name="Hotuta T."/>
            <person name="Kusano J."/>
            <person name="Kanehori K."/>
            <person name="Takahashi-Fujii A."/>
            <person name="Hara H."/>
            <person name="Tanase T.-O."/>
            <person name="Nomura Y."/>
            <person name="Togiya S."/>
            <person name="Komai F."/>
            <person name="Hara R."/>
            <person name="Takeuchi K."/>
            <person name="Arita M."/>
            <person name="Imose N."/>
            <person name="Musashino K."/>
            <person name="Yuuki H."/>
            <person name="Oshima A."/>
            <person name="Sasaki N."/>
            <person name="Aotsuka S."/>
            <person name="Yoshikawa Y."/>
            <person name="Matsunawa H."/>
            <person name="Ichihara T."/>
            <person name="Shiohata N."/>
            <person name="Sano S."/>
            <person name="Moriya S."/>
            <person name="Momiyama H."/>
            <person name="Satoh N."/>
            <person name="Takami S."/>
            <person name="Terashima Y."/>
            <person name="Suzuki O."/>
            <person name="Nakagawa S."/>
            <person name="Senoh A."/>
            <person name="Mizoguchi H."/>
            <person name="Goto Y."/>
            <person name="Shimizu F."/>
            <person name="Wakebe H."/>
            <person name="Hishigaki H."/>
            <person name="Watanabe T."/>
            <person name="Sugiyama A."/>
            <person name="Takemoto M."/>
            <person name="Kawakami B."/>
            <person name="Yamazaki M."/>
            <person name="Watanabe K."/>
            <person name="Kumagai A."/>
            <person name="Itakura S."/>
            <person name="Fukuzumi Y."/>
            <person name="Fujimori Y."/>
            <person name="Komiyama M."/>
            <person name="Tashiro H."/>
            <person name="Tanigami A."/>
            <person name="Fujiwara T."/>
            <person name="Ono T."/>
            <person name="Yamada K."/>
            <person name="Fujii Y."/>
            <person name="Ozaki K."/>
            <person name="Hirao M."/>
            <person name="Ohmori Y."/>
            <person name="Kawabata A."/>
            <person name="Hikiji T."/>
            <person name="Kobatake N."/>
            <person name="Inagaki H."/>
            <person name="Ikema Y."/>
            <person name="Okamoto S."/>
            <person name="Okitani R."/>
            <person name="Kawakami T."/>
            <person name="Noguchi S."/>
            <person name="Itoh T."/>
            <person name="Shigeta K."/>
            <person name="Senba T."/>
            <person name="Matsumura K."/>
            <person name="Nakajima Y."/>
            <person name="Mizuno T."/>
            <person name="Morinaga M."/>
            <person name="Sasaki M."/>
            <person name="Togashi T."/>
            <person name="Oyama M."/>
            <person name="Hata H."/>
            <person name="Watanabe M."/>
            <person name="Komatsu T."/>
            <person name="Mizushima-Sugano J."/>
            <person name="Satoh T."/>
            <person name="Shirai Y."/>
            <person name="Takahashi Y."/>
            <person name="Nakagawa K."/>
            <person name="Okumura K."/>
            <person name="Nagase T."/>
            <person name="Nomura N."/>
            <person name="Kikuchi H."/>
            <person name="Masuho Y."/>
            <person name="Yamashita R."/>
            <person name="Nakai K."/>
            <person name="Yada T."/>
            <person name="Nakamura Y."/>
            <person name="Ohara O."/>
            <person name="Isogai T."/>
            <person name="Sugano S."/>
        </authorList>
    </citation>
    <scope>NUCLEOTIDE SEQUENCE [LARGE SCALE MRNA] (ISOFORM 6)</scope>
    <source>
        <tissue>Brain</tissue>
    </source>
</reference>
<reference key="4">
    <citation type="submission" date="2004-10" db="EMBL/GenBank/DDBJ databases">
        <title>Cloning of human full-length CDSs in BD Creator(TM) system donor vector.</title>
        <authorList>
            <person name="Kalnine N."/>
            <person name="Chen X."/>
            <person name="Rolfs A."/>
            <person name="Halleck A."/>
            <person name="Hines L."/>
            <person name="Eisenstein S."/>
            <person name="Koundinya M."/>
            <person name="Raphael J."/>
            <person name="Moreira D."/>
            <person name="Kelley T."/>
            <person name="LaBaer J."/>
            <person name="Lin Y."/>
            <person name="Phelan M."/>
            <person name="Farmer A."/>
        </authorList>
    </citation>
    <scope>NUCLEOTIDE SEQUENCE [LARGE SCALE MRNA] (ISOFORM 3)</scope>
</reference>
<reference key="5">
    <citation type="journal article" date="2004" name="Nature">
        <title>The DNA sequence and biology of human chromosome 19.</title>
        <authorList>
            <person name="Grimwood J."/>
            <person name="Gordon L.A."/>
            <person name="Olsen A.S."/>
            <person name="Terry A."/>
            <person name="Schmutz J."/>
            <person name="Lamerdin J.E."/>
            <person name="Hellsten U."/>
            <person name="Goodstein D."/>
            <person name="Couronne O."/>
            <person name="Tran-Gyamfi M."/>
            <person name="Aerts A."/>
            <person name="Altherr M."/>
            <person name="Ashworth L."/>
            <person name="Bajorek E."/>
            <person name="Black S."/>
            <person name="Branscomb E."/>
            <person name="Caenepeel S."/>
            <person name="Carrano A.V."/>
            <person name="Caoile C."/>
            <person name="Chan Y.M."/>
            <person name="Christensen M."/>
            <person name="Cleland C.A."/>
            <person name="Copeland A."/>
            <person name="Dalin E."/>
            <person name="Dehal P."/>
            <person name="Denys M."/>
            <person name="Detter J.C."/>
            <person name="Escobar J."/>
            <person name="Flowers D."/>
            <person name="Fotopulos D."/>
            <person name="Garcia C."/>
            <person name="Georgescu A.M."/>
            <person name="Glavina T."/>
            <person name="Gomez M."/>
            <person name="Gonzales E."/>
            <person name="Groza M."/>
            <person name="Hammon N."/>
            <person name="Hawkins T."/>
            <person name="Haydu L."/>
            <person name="Ho I."/>
            <person name="Huang W."/>
            <person name="Israni S."/>
            <person name="Jett J."/>
            <person name="Kadner K."/>
            <person name="Kimball H."/>
            <person name="Kobayashi A."/>
            <person name="Larionov V."/>
            <person name="Leem S.-H."/>
            <person name="Lopez F."/>
            <person name="Lou Y."/>
            <person name="Lowry S."/>
            <person name="Malfatti S."/>
            <person name="Martinez D."/>
            <person name="McCready P.M."/>
            <person name="Medina C."/>
            <person name="Morgan J."/>
            <person name="Nelson K."/>
            <person name="Nolan M."/>
            <person name="Ovcharenko I."/>
            <person name="Pitluck S."/>
            <person name="Pollard M."/>
            <person name="Popkie A.P."/>
            <person name="Predki P."/>
            <person name="Quan G."/>
            <person name="Ramirez L."/>
            <person name="Rash S."/>
            <person name="Retterer J."/>
            <person name="Rodriguez A."/>
            <person name="Rogers S."/>
            <person name="Salamov A."/>
            <person name="Salazar A."/>
            <person name="She X."/>
            <person name="Smith D."/>
            <person name="Slezak T."/>
            <person name="Solovyev V."/>
            <person name="Thayer N."/>
            <person name="Tice H."/>
            <person name="Tsai M."/>
            <person name="Ustaszewska A."/>
            <person name="Vo N."/>
            <person name="Wagner M."/>
            <person name="Wheeler J."/>
            <person name="Wu K."/>
            <person name="Xie G."/>
            <person name="Yang J."/>
            <person name="Dubchak I."/>
            <person name="Furey T.S."/>
            <person name="DeJong P."/>
            <person name="Dickson M."/>
            <person name="Gordon D."/>
            <person name="Eichler E.E."/>
            <person name="Pennacchio L.A."/>
            <person name="Richardson P."/>
            <person name="Stubbs L."/>
            <person name="Rokhsar D.S."/>
            <person name="Myers R.M."/>
            <person name="Rubin E.M."/>
            <person name="Lucas S.M."/>
        </authorList>
    </citation>
    <scope>NUCLEOTIDE SEQUENCE [LARGE SCALE GENOMIC DNA]</scope>
</reference>
<reference key="6">
    <citation type="submission" date="2005-07" db="EMBL/GenBank/DDBJ databases">
        <authorList>
            <person name="Mural R.J."/>
            <person name="Istrail S."/>
            <person name="Sutton G.G."/>
            <person name="Florea L."/>
            <person name="Halpern A.L."/>
            <person name="Mobarry C.M."/>
            <person name="Lippert R."/>
            <person name="Walenz B."/>
            <person name="Shatkay H."/>
            <person name="Dew I."/>
            <person name="Miller J.R."/>
            <person name="Flanigan M.J."/>
            <person name="Edwards N.J."/>
            <person name="Bolanos R."/>
            <person name="Fasulo D."/>
            <person name="Halldorsson B.V."/>
            <person name="Hannenhalli S."/>
            <person name="Turner R."/>
            <person name="Yooseph S."/>
            <person name="Lu F."/>
            <person name="Nusskern D.R."/>
            <person name="Shue B.C."/>
            <person name="Zheng X.H."/>
            <person name="Zhong F."/>
            <person name="Delcher A.L."/>
            <person name="Huson D.H."/>
            <person name="Kravitz S.A."/>
            <person name="Mouchard L."/>
            <person name="Reinert K."/>
            <person name="Remington K.A."/>
            <person name="Clark A.G."/>
            <person name="Waterman M.S."/>
            <person name="Eichler E.E."/>
            <person name="Adams M.D."/>
            <person name="Hunkapiller M.W."/>
            <person name="Myers E.W."/>
            <person name="Venter J.C."/>
        </authorList>
    </citation>
    <scope>NUCLEOTIDE SEQUENCE [LARGE SCALE GENOMIC DNA]</scope>
</reference>
<reference key="7">
    <citation type="journal article" date="2004" name="Genome Res.">
        <title>The status, quality, and expansion of the NIH full-length cDNA project: the Mammalian Gene Collection (MGC).</title>
        <authorList>
            <consortium name="The MGC Project Team"/>
        </authorList>
    </citation>
    <scope>NUCLEOTIDE SEQUENCE [LARGE SCALE MRNA] (ISOFORM 5)</scope>
    <source>
        <tissue>Brain</tissue>
    </source>
</reference>
<reference key="8">
    <citation type="journal article" date="1995" name="Genomics">
        <title>Chromosomal localization of the four genes (NFIA, B, C, and X) for the human transcription factor nuclear factor I by FISH.</title>
        <authorList>
            <person name="Qian F."/>
            <person name="Kruse U."/>
            <person name="Lichter P."/>
            <person name="Sippel A.E."/>
        </authorList>
    </citation>
    <scope>NUCLEOTIDE SEQUENCE [MRNA] OF 19-228</scope>
</reference>
<reference key="9">
    <citation type="journal article" date="2009" name="Sci. Signal.">
        <title>Quantitative phosphoproteomic analysis of T cell receptor signaling reveals system-wide modulation of protein-protein interactions.</title>
        <authorList>
            <person name="Mayya V."/>
            <person name="Lundgren D.H."/>
            <person name="Hwang S.-I."/>
            <person name="Rezaul K."/>
            <person name="Wu L."/>
            <person name="Eng J.K."/>
            <person name="Rodionov V."/>
            <person name="Han D.K."/>
        </authorList>
    </citation>
    <scope>PHOSPHORYLATION [LARGE SCALE ANALYSIS] AT SER-280</scope>
    <scope>IDENTIFICATION BY MASS SPECTROMETRY [LARGE SCALE ANALYSIS]</scope>
    <source>
        <tissue>Leukemic T-cell</tissue>
    </source>
</reference>
<reference key="10">
    <citation type="journal article" date="2010" name="Am. J. Hum. Genet.">
        <title>Distinct effects of allelic NFIX mutations on nonsense-mediated mRNA decay engender either a Sotos-like or a Marshall-Smith syndrome.</title>
        <authorList>
            <person name="Malan V."/>
            <person name="Rajan D."/>
            <person name="Thomas S."/>
            <person name="Shaw A.C."/>
            <person name="Louis Dit Picard H."/>
            <person name="Layet V."/>
            <person name="Till M."/>
            <person name="van Haeringen A."/>
            <person name="Mortier G."/>
            <person name="Nampoothiri S."/>
            <person name="Puseljic S."/>
            <person name="Legeai-Mallet L."/>
            <person name="Carter N.P."/>
            <person name="Vekemans M."/>
            <person name="Munnich A."/>
            <person name="Hennekam R.C."/>
            <person name="Colleaux L."/>
            <person name="Cormier-Daire V."/>
        </authorList>
    </citation>
    <scope>INVOLVEMENT IN MALNS AND MRSHSS</scope>
    <scope>TISSUE SPECIFICITY</scope>
    <scope>DEVELOPMENTAL STAGE</scope>
</reference>
<reference key="11">
    <citation type="journal article" date="2013" name="J. Proteome Res.">
        <title>Toward a comprehensive characterization of a human cancer cell phosphoproteome.</title>
        <authorList>
            <person name="Zhou H."/>
            <person name="Di Palma S."/>
            <person name="Preisinger C."/>
            <person name="Peng M."/>
            <person name="Polat A.N."/>
            <person name="Heck A.J."/>
            <person name="Mohammed S."/>
        </authorList>
    </citation>
    <scope>PHOSPHORYLATION [LARGE SCALE ANALYSIS] AT SER-265</scope>
    <scope>IDENTIFICATION BY MASS SPECTROMETRY [LARGE SCALE ANALYSIS]</scope>
    <source>
        <tissue>Erythroleukemia</tissue>
    </source>
</reference>
<reference key="12">
    <citation type="journal article" date="2014" name="J. Proteomics">
        <title>An enzyme assisted RP-RPLC approach for in-depth analysis of human liver phosphoproteome.</title>
        <authorList>
            <person name="Bian Y."/>
            <person name="Song C."/>
            <person name="Cheng K."/>
            <person name="Dong M."/>
            <person name="Wang F."/>
            <person name="Huang J."/>
            <person name="Sun D."/>
            <person name="Wang L."/>
            <person name="Ye M."/>
            <person name="Zou H."/>
        </authorList>
    </citation>
    <scope>PHOSPHORYLATION [LARGE SCALE ANALYSIS] AT SER-280</scope>
    <scope>IDENTIFICATION BY MASS SPECTROMETRY [LARGE SCALE ANALYSIS]</scope>
    <source>
        <tissue>Liver</tissue>
    </source>
</reference>
<reference key="13">
    <citation type="journal article" date="2017" name="Nat. Struct. Mol. Biol.">
        <title>Site-specific mapping of the human SUMO proteome reveals co-modification with phosphorylation.</title>
        <authorList>
            <person name="Hendriks I.A."/>
            <person name="Lyon D."/>
            <person name="Young C."/>
            <person name="Jensen L.J."/>
            <person name="Vertegaal A.C."/>
            <person name="Nielsen M.L."/>
        </authorList>
    </citation>
    <scope>SUMOYLATION [LARGE SCALE ANALYSIS] AT LYS-279</scope>
    <scope>IDENTIFICATION BY MASS SPECTROMETRY [LARGE SCALE ANALYSIS]</scope>
</reference>
<reference key="14">
    <citation type="journal article" date="2020" name="Cell. Mol. Life Sci.">
        <title>The evolution of the 9aaTAD domain in Sp2 proteins: inactivation with valines and intron reservoirs.</title>
        <authorList>
            <person name="Piskacek M."/>
            <person name="Havelka M."/>
            <person name="Jendruchova K."/>
            <person name="Knight A."/>
            <person name="Keegan L.P."/>
        </authorList>
    </citation>
    <scope>9AATAD MOTIF</scope>
</reference>
<reference key="15">
    <citation type="journal article" date="2012" name="J. Hum. Genet.">
        <title>Missense mutations in the DNA-binding/dimerization domain of NFIX cause Sotos-like features.</title>
        <authorList>
            <person name="Yoneda Y."/>
            <person name="Saitsu H."/>
            <person name="Touyama M."/>
            <person name="Makita Y."/>
            <person name="Miyamoto A."/>
            <person name="Hamada K."/>
            <person name="Kurotaki N."/>
            <person name="Tomita H."/>
            <person name="Nishiyama K."/>
            <person name="Tsurusaki Y."/>
            <person name="Doi H."/>
            <person name="Miyake N."/>
            <person name="Ogata K."/>
            <person name="Naritomi K."/>
            <person name="Matsumoto N."/>
        </authorList>
    </citation>
    <scope>VARIANTS MALNS PRO-60 AND PRO-121</scope>
</reference>
<reference key="16">
    <citation type="journal article" date="2015" name="Eur. J. Med. Genet.">
        <title>NFIX mutations affecting the DNA-binding domain cause a peculiar overgrowth syndrome (Malan syndrome): a new patients series.</title>
        <authorList>
            <person name="Gurrieri F."/>
            <person name="Cavaliere M.L."/>
            <person name="Wischmeijer A."/>
            <person name="Mammi C."/>
            <person name="Neri G."/>
            <person name="Pisanti M.A."/>
            <person name="Rodella G."/>
            <person name="Lagana C."/>
            <person name="Priolo M."/>
        </authorList>
    </citation>
    <scope>VARIANTS MALNS PRO-116 AND GLU-125</scope>
</reference>
<reference key="17">
    <citation type="journal article" date="2015" name="Pediatr. Res.">
        <title>Novel mutations of NFIX gene causing Marshall-Smith syndrome or Sotos-like syndrome: one gene, two phenotypes.</title>
        <authorList>
            <person name="Martinez F."/>
            <person name="Marin-Reina P."/>
            <person name="Sanchis-Calvo A."/>
            <person name="Perez-Aytes A."/>
            <person name="Oltra S."/>
            <person name="Rosello M."/>
            <person name="Mayo S."/>
            <person name="Monfort S."/>
            <person name="Pantoja J."/>
            <person name="Orellana C."/>
        </authorList>
    </citation>
    <scope>INVOLVEMENT IN MRSHSS</scope>
    <scope>VARIANTS MALNS CYS-38 AND PRO-54</scope>
</reference>
<name>NFIX_HUMAN</name>
<accession>Q14938</accession>
<accession>B4DM25</accession>
<accession>O60413</accession>
<accession>Q0VG09</accession>
<accession>Q12859</accession>
<accession>Q13050</accession>
<accession>Q13052</accession>
<accession>Q5U094</accession>
<accession>Q9UPH1</accession>
<accession>Q9Y6R8</accession>
<gene>
    <name type="primary">NFIX</name>
</gene>
<evidence type="ECO:0000250" key="1">
    <source>
        <dbReference type="UniProtKB" id="P70257"/>
    </source>
</evidence>
<evidence type="ECO:0000255" key="2">
    <source>
        <dbReference type="PROSITE-ProRule" id="PRU00436"/>
    </source>
</evidence>
<evidence type="ECO:0000256" key="3">
    <source>
        <dbReference type="SAM" id="MobiDB-lite"/>
    </source>
</evidence>
<evidence type="ECO:0000269" key="4">
    <source>
    </source>
</evidence>
<evidence type="ECO:0000269" key="5">
    <source>
    </source>
</evidence>
<evidence type="ECO:0000269" key="6">
    <source>
    </source>
</evidence>
<evidence type="ECO:0000269" key="7">
    <source>
    </source>
</evidence>
<evidence type="ECO:0000269" key="8">
    <source>
    </source>
</evidence>
<evidence type="ECO:0000303" key="9">
    <source>
    </source>
</evidence>
<evidence type="ECO:0000303" key="10">
    <source>
    </source>
</evidence>
<evidence type="ECO:0000303" key="11">
    <source>
    </source>
</evidence>
<evidence type="ECO:0000303" key="12">
    <source>
    </source>
</evidence>
<evidence type="ECO:0000303" key="13">
    <source ref="4"/>
</evidence>
<evidence type="ECO:0000305" key="14"/>
<evidence type="ECO:0007744" key="15">
    <source>
    </source>
</evidence>
<evidence type="ECO:0007744" key="16">
    <source>
    </source>
</evidence>
<evidence type="ECO:0007744" key="17">
    <source>
    </source>
</evidence>
<evidence type="ECO:0007744" key="18">
    <source>
    </source>
</evidence>
<evidence type="ECO:0007829" key="19">
    <source>
        <dbReference type="PDB" id="7QQD"/>
    </source>
</evidence>
<evidence type="ECO:0007829" key="20">
    <source>
        <dbReference type="PDB" id="7QQE"/>
    </source>
</evidence>
<sequence>MYSPYCLTQDEFHPFIEALLPHVRAFSYTWFNLQARKRKYFKKHEKRMSKDEERAVKDELLGEKPEIKQKWASRLLAKLRKDIRPEFREDFVLTITGKKPPCCVLSNPDQKGKIRRIDCLRQADKVWRLDLVMVILFKGIPLESTDGERLYKSPQCSNPGLCVQPHHIGVTIKELDLYLAYFVHTPESGQSDSSNQQGDADIKPLPNGHLSFQDCFVTSGVWNVTELVRVSQTPVATASGPNFSLADLESPSYYNINQVTLGRRSITSPPSTSTTKRPKSIDDSEMESPVDDVFYPGTGRSPAAGSSQSSGWPNDVDAGPASLKKSGKLDFCSALSSQGSSPRMAFTHHPLPVLAGVRPGSPRATASALHFPSTSIIQQSSPYFTHPTIRYHHHHGQDSLKEFVQFVCSDGSGQATGQPNGSGQGKVPGSFLLPPPPPVARPVPLPMPDSKSTSTAPDGAALTPPSPSFATTGASSANRFVSIGPRDGNFLNIPQQSQSWFL</sequence>
<feature type="chain" id="PRO_0000100203" description="Nuclear factor 1 X-type">
    <location>
        <begin position="1"/>
        <end position="502"/>
    </location>
</feature>
<feature type="DNA-binding region" description="CTF/NF-I" evidence="2">
    <location>
        <begin position="1"/>
        <end position="194"/>
    </location>
</feature>
<feature type="region of interest" description="Disordered" evidence="3">
    <location>
        <begin position="264"/>
        <end position="320"/>
    </location>
</feature>
<feature type="region of interest" description="Disordered" evidence="3">
    <location>
        <begin position="411"/>
        <end position="474"/>
    </location>
</feature>
<feature type="short sequence motif" description="9aaTAD" evidence="8">
    <location>
        <begin position="398"/>
        <end position="406"/>
    </location>
</feature>
<feature type="compositionally biased region" description="Low complexity" evidence="3">
    <location>
        <begin position="264"/>
        <end position="275"/>
    </location>
</feature>
<feature type="compositionally biased region" description="Pro residues" evidence="3">
    <location>
        <begin position="433"/>
        <end position="447"/>
    </location>
</feature>
<feature type="modified residue" description="Phosphoserine" evidence="16">
    <location>
        <position position="265"/>
    </location>
</feature>
<feature type="modified residue" description="Phosphoserine" evidence="15 17">
    <location>
        <position position="280"/>
    </location>
</feature>
<feature type="modified residue" description="Phosphoserine" evidence="1">
    <location>
        <position position="288"/>
    </location>
</feature>
<feature type="modified residue" description="Phosphoserine" evidence="1">
    <location>
        <position position="301"/>
    </location>
</feature>
<feature type="modified residue" description="Phosphoserine" evidence="1">
    <location>
        <position position="341"/>
    </location>
</feature>
<feature type="modified residue" description="Asymmetric dimethylarginine" evidence="1">
    <location>
        <position position="343"/>
    </location>
</feature>
<feature type="modified residue" description="Asymmetric dimethylarginine" evidence="1">
    <location>
        <position position="390"/>
    </location>
</feature>
<feature type="cross-link" description="Glycyl lysine isopeptide (Lys-Gly) (interchain with G-Cter in SUMO2)" evidence="18">
    <location>
        <position position="279"/>
    </location>
</feature>
<feature type="splice variant" id="VSP_003558" description="In isoform 4 and isoform 6." evidence="9 12">
    <original>MYSPYCLTQ</original>
    <variation>M</variation>
    <location>
        <begin position="1"/>
        <end position="9"/>
    </location>
</feature>
<feature type="splice variant" id="VSP_003559" description="In isoform 5." evidence="10 12">
    <original>MYSPYCLT</original>
    <variation>MLPACRL</variation>
    <location>
        <begin position="1"/>
        <end position="8"/>
    </location>
</feature>
<feature type="splice variant" id="VSP_003560" description="In isoform 2." evidence="11">
    <location>
        <begin position="318"/>
        <end position="359"/>
    </location>
</feature>
<feature type="splice variant" id="VSP_003561" description="In isoform 3, isoform 5 and isoform 6." evidence="9 10 12 13">
    <original>PNGSGQGKVPGSFLLPPPPPVAR</original>
    <variation>HSQRQAPPLPTGLSASDPGTATF</variation>
    <location>
        <begin position="419"/>
        <end position="441"/>
    </location>
</feature>
<feature type="splice variant" id="VSP_003562" description="In isoform 3, isoform 5 and isoform 6." evidence="9 10 12 13">
    <location>
        <begin position="442"/>
        <end position="502"/>
    </location>
</feature>
<feature type="sequence variant" id="VAR_077571" description="In MALNS." evidence="7">
    <original>R</original>
    <variation>C</variation>
    <location>
        <position position="38"/>
    </location>
</feature>
<feature type="sequence variant" id="VAR_077572" description="In MALNS." evidence="7">
    <original>R</original>
    <variation>P</variation>
    <location>
        <position position="54"/>
    </location>
</feature>
<feature type="sequence variant" id="VAR_068720" description="In MALNS; dbSNP:rs387907254." evidence="5">
    <original>L</original>
    <variation>P</variation>
    <location>
        <position position="60"/>
    </location>
</feature>
<feature type="sequence variant" id="VAR_077573" description="In MALNS." evidence="6">
    <original>R</original>
    <variation>P</variation>
    <location>
        <position position="116"/>
    </location>
</feature>
<feature type="sequence variant" id="VAR_068721" description="In MALNS; dbSNP:rs387907255." evidence="5">
    <original>R</original>
    <variation>P</variation>
    <location>
        <position position="121"/>
    </location>
</feature>
<feature type="sequence variant" id="VAR_077574" description="In MALNS; dbSNP:rs2145192745." evidence="6">
    <original>K</original>
    <variation>E</variation>
    <location>
        <position position="125"/>
    </location>
</feature>
<feature type="sequence conflict" description="In Ref. 1; AAA53422." evidence="14" ref="1">
    <original>F</original>
    <variation>Y</variation>
    <location>
        <position position="91"/>
    </location>
</feature>
<feature type="sequence conflict" description="In Ref. 3; BAG59737." evidence="14" ref="3">
    <original>S</original>
    <variation>P</variation>
    <location>
        <position position="399"/>
    </location>
</feature>
<feature type="helix" evidence="19">
    <location>
        <begin position="14"/>
        <end position="19"/>
    </location>
</feature>
<feature type="helix" evidence="19">
    <location>
        <begin position="20"/>
        <end position="22"/>
    </location>
</feature>
<feature type="helix" evidence="19">
    <location>
        <begin position="26"/>
        <end position="44"/>
    </location>
</feature>
<feature type="helix" evidence="19">
    <location>
        <begin position="50"/>
        <end position="61"/>
    </location>
</feature>
<feature type="helix" evidence="19">
    <location>
        <begin position="65"/>
        <end position="82"/>
    </location>
</feature>
<feature type="helix" evidence="19">
    <location>
        <begin position="85"/>
        <end position="87"/>
    </location>
</feature>
<feature type="helix" evidence="19">
    <location>
        <begin position="88"/>
        <end position="95"/>
    </location>
</feature>
<feature type="strand" evidence="20">
    <location>
        <begin position="110"/>
        <end position="113"/>
    </location>
</feature>
<feature type="strand" evidence="19">
    <location>
        <begin position="119"/>
        <end position="123"/>
    </location>
</feature>
<feature type="helix" evidence="19">
    <location>
        <begin position="129"/>
        <end position="138"/>
    </location>
</feature>
<feature type="helix" evidence="19">
    <location>
        <begin position="146"/>
        <end position="149"/>
    </location>
</feature>
<feature type="strand" evidence="19">
    <location>
        <begin position="150"/>
        <end position="152"/>
    </location>
</feature>
<feature type="turn" evidence="19">
    <location>
        <begin position="159"/>
        <end position="161"/>
    </location>
</feature>
<feature type="turn" evidence="19">
    <location>
        <begin position="165"/>
        <end position="167"/>
    </location>
</feature>
<feature type="strand" evidence="19">
    <location>
        <begin position="168"/>
        <end position="170"/>
    </location>
</feature>
<keyword id="KW-0002">3D-structure</keyword>
<keyword id="KW-0010">Activator</keyword>
<keyword id="KW-0025">Alternative splicing</keyword>
<keyword id="KW-0225">Disease variant</keyword>
<keyword id="KW-0235">DNA replication</keyword>
<keyword id="KW-0238">DNA-binding</keyword>
<keyword id="KW-1017">Isopeptide bond</keyword>
<keyword id="KW-0488">Methylation</keyword>
<keyword id="KW-0539">Nucleus</keyword>
<keyword id="KW-0597">Phosphoprotein</keyword>
<keyword id="KW-1267">Proteomics identification</keyword>
<keyword id="KW-1185">Reference proteome</keyword>
<keyword id="KW-0804">Transcription</keyword>
<keyword id="KW-0805">Transcription regulation</keyword>
<keyword id="KW-0832">Ubl conjugation</keyword>
<comment type="function">
    <text>Recognizes and binds the palindromic sequence 5'-TTGGCNNNNNGCCAA-3' present in viral and cellular promoters and in the origin of replication of adenovirus type 2. These proteins are individually capable of activating transcription and replication.</text>
</comment>
<comment type="subunit">
    <text>Binds DNA as a homodimer.</text>
</comment>
<comment type="interaction">
    <interactant intactId="EBI-8476987">
        <id>Q14938</id>
    </interactant>
    <interactant intactId="EBI-2798044">
        <id>Q2TAL8</id>
        <label>QRICH1</label>
    </interactant>
    <organismsDiffer>false</organismsDiffer>
    <experiments>3</experiments>
</comment>
<comment type="interaction">
    <interactant intactId="EBI-8476987">
        <id>Q14938</id>
    </interactant>
    <interactant intactId="EBI-9675993">
        <id>Q8N883</id>
        <label>ZNF614</label>
    </interactant>
    <organismsDiffer>false</organismsDiffer>
    <experiments>3</experiments>
</comment>
<comment type="interaction">
    <interactant intactId="EBI-20559045">
        <id>Q14938-3</id>
    </interactant>
    <interactant intactId="EBI-518675">
        <id>P40763</id>
        <label>STAT3</label>
    </interactant>
    <organismsDiffer>false</organismsDiffer>
    <experiments>3</experiments>
</comment>
<comment type="interaction">
    <interactant intactId="EBI-20558886">
        <id>Q14938-4</id>
    </interactant>
    <interactant intactId="EBI-518675">
        <id>P40763</id>
        <label>STAT3</label>
    </interactant>
    <organismsDiffer>false</organismsDiffer>
    <experiments>3</experiments>
</comment>
<comment type="interaction">
    <interactant intactId="EBI-12024662">
        <id>Q14938-5</id>
    </interactant>
    <interactant intactId="EBI-744248">
        <id>P40692</id>
        <label>MLH1</label>
    </interactant>
    <organismsDiffer>false</organismsDiffer>
    <experiments>3</experiments>
</comment>
<comment type="interaction">
    <interactant intactId="EBI-12024662">
        <id>Q14938-5</id>
    </interactant>
    <interactant intactId="EBI-16430952">
        <id>A0A0S2Z4H3</id>
        <label>NFIB</label>
    </interactant>
    <organismsDiffer>false</organismsDiffer>
    <experiments>3</experiments>
</comment>
<comment type="interaction">
    <interactant intactId="EBI-12024662">
        <id>Q14938-5</id>
    </interactant>
    <interactant intactId="EBI-2798044">
        <id>Q2TAL8</id>
        <label>QRICH1</label>
    </interactant>
    <organismsDiffer>false</organismsDiffer>
    <experiments>3</experiments>
</comment>
<comment type="subcellular location">
    <subcellularLocation>
        <location>Nucleus</location>
    </subcellularLocation>
</comment>
<comment type="alternative products">
    <event type="alternative splicing"/>
    <isoform>
        <id>Q14938-1</id>
        <name>1</name>
        <sequence type="displayed"/>
    </isoform>
    <isoform>
        <id>Q14938-2</id>
        <name>2</name>
        <sequence type="described" ref="VSP_003560"/>
    </isoform>
    <isoform>
        <id>Q14938-3</id>
        <name>3</name>
        <sequence type="described" ref="VSP_003561 VSP_003562"/>
    </isoform>
    <isoform>
        <id>Q14938-4</id>
        <name>4</name>
        <sequence type="described" ref="VSP_003558"/>
    </isoform>
    <isoform>
        <id>Q14938-5</id>
        <name>5</name>
        <sequence type="described" ref="VSP_003559 VSP_003561 VSP_003562"/>
    </isoform>
    <isoform>
        <id>Q14938-6</id>
        <name>6</name>
        <sequence type="described" ref="VSP_003558 VSP_003561 VSP_003562"/>
    </isoform>
</comment>
<comment type="tissue specificity">
    <text evidence="4">Widely expressed.</text>
</comment>
<comment type="developmental stage">
    <text evidence="4">Prominent expression is observed in the central and peripheral nervous system in the embryo at Carnagie stage 17 (CS17; gestational day 42); at this stage it is also observed in the mandibular arch, cartilage primordium of the humerus, scapula, and vertebrae; in the limb expression is detected in the perichondrium. Expressed in the cerebral cortex, hippocampus, and faintly in the thalamus in fetal brain at 22 weeks of gestation,.</text>
</comment>
<comment type="domain">
    <text evidence="8">The 9aaTAD motif is a transactivation domain present in a large number of yeast and animal transcription factors.</text>
</comment>
<comment type="disease" evidence="4 5 6 7">
    <disease id="DI-03506">
        <name>Malan syndrome</name>
        <acronym>MALNS</acronym>
        <description>An autosomal dominant syndrome characterized by overgrowth, advanced bone age, macrocephaly, impaired intellectual development, behavior anomalies, and dysmorphic facial features. Patients develop marfanoid habitus, with long and slender body, very low body mass, long narrow face, and arachnodactyly.</description>
        <dbReference type="MIM" id="614753"/>
    </disease>
    <text>The disease is caused by variants affecting the gene represented in this entry.</text>
</comment>
<comment type="disease" evidence="4 7">
    <disease id="DI-03505">
        <name>Marshall-Smith syndrome</name>
        <acronym>MRSHSS</acronym>
        <description>A distinct malformation syndrome characterized by accelerated skeletal maturation, relative failure to thrive, respiratory difficulties, intellectual disability, and unusual facies, including prominent forehead, shallow orbits, blue sclerae, depressed nasal bridge, and micrognathia. Additional skeletal findings include long and thin tubular bones, broad middle phalanges with relatively narrow distal phalanges, and scoliosis. Inheritance is autosomal dominant.</description>
        <dbReference type="MIM" id="602535"/>
    </disease>
    <text>The disease is caused by variants affecting the gene represented in this entry.</text>
</comment>
<comment type="similarity">
    <text evidence="2">Belongs to the CTF/NF-I family.</text>
</comment>
<protein>
    <recommendedName>
        <fullName>Nuclear factor 1 X-type</fullName>
        <shortName>NF1-X</shortName>
        <shortName>Nuclear factor 1/X</shortName>
    </recommendedName>
    <alternativeName>
        <fullName>CCAAT-box-binding transcription factor</fullName>
        <shortName>CTF</shortName>
    </alternativeName>
    <alternativeName>
        <fullName>Nuclear factor I/X</fullName>
        <shortName>NF-I/X</shortName>
        <shortName>NFI-X</shortName>
    </alternativeName>
    <alternativeName>
        <fullName>TGGCA-binding protein</fullName>
    </alternativeName>
</protein>
<organism>
    <name type="scientific">Homo sapiens</name>
    <name type="common">Human</name>
    <dbReference type="NCBI Taxonomy" id="9606"/>
    <lineage>
        <taxon>Eukaryota</taxon>
        <taxon>Metazoa</taxon>
        <taxon>Chordata</taxon>
        <taxon>Craniata</taxon>
        <taxon>Vertebrata</taxon>
        <taxon>Euteleostomi</taxon>
        <taxon>Mammalia</taxon>
        <taxon>Eutheria</taxon>
        <taxon>Euarchontoglires</taxon>
        <taxon>Primates</taxon>
        <taxon>Haplorrhini</taxon>
        <taxon>Catarrhini</taxon>
        <taxon>Hominidae</taxon>
        <taxon>Homo</taxon>
    </lineage>
</organism>